<comment type="similarity">
    <text evidence="1">Belongs to the SlyX family.</text>
</comment>
<name>SLYX_YERPG</name>
<accession>A9R470</accession>
<sequence>MEQSLLEQRLEMLESRLAFQEVTIEELNLIVTEHQMEMTKLREHLRLLTDKLRESQSSMLASPSEETPPPHY</sequence>
<proteinExistence type="inferred from homology"/>
<protein>
    <recommendedName>
        <fullName evidence="1">Protein SlyX</fullName>
    </recommendedName>
</protein>
<evidence type="ECO:0000255" key="1">
    <source>
        <dbReference type="HAMAP-Rule" id="MF_00715"/>
    </source>
</evidence>
<evidence type="ECO:0000256" key="2">
    <source>
        <dbReference type="SAM" id="MobiDB-lite"/>
    </source>
</evidence>
<dbReference type="EMBL" id="CP000901">
    <property type="protein sequence ID" value="ABX85101.1"/>
    <property type="molecule type" value="Genomic_DNA"/>
</dbReference>
<dbReference type="RefSeq" id="WP_002212317.1">
    <property type="nucleotide sequence ID" value="NZ_CP009935.1"/>
</dbReference>
<dbReference type="SMR" id="A9R470"/>
<dbReference type="KEGG" id="ypg:YpAngola_A3684"/>
<dbReference type="PATRIC" id="fig|349746.12.peg.389"/>
<dbReference type="Gene3D" id="1.20.5.300">
    <property type="match status" value="1"/>
</dbReference>
<dbReference type="HAMAP" id="MF_00715">
    <property type="entry name" value="SlyX"/>
    <property type="match status" value="1"/>
</dbReference>
<dbReference type="InterPro" id="IPR007236">
    <property type="entry name" value="SlyX"/>
</dbReference>
<dbReference type="NCBIfam" id="NF002750">
    <property type="entry name" value="PRK02793.1"/>
    <property type="match status" value="1"/>
</dbReference>
<dbReference type="PANTHER" id="PTHR36508">
    <property type="entry name" value="PROTEIN SLYX"/>
    <property type="match status" value="1"/>
</dbReference>
<dbReference type="PANTHER" id="PTHR36508:SF1">
    <property type="entry name" value="PROTEIN SLYX"/>
    <property type="match status" value="1"/>
</dbReference>
<dbReference type="Pfam" id="PF04102">
    <property type="entry name" value="SlyX"/>
    <property type="match status" value="1"/>
</dbReference>
<gene>
    <name evidence="1" type="primary">slyX</name>
    <name type="ordered locus">YpAngola_A3684</name>
</gene>
<reference key="1">
    <citation type="journal article" date="2010" name="J. Bacteriol.">
        <title>Genome sequence of the deep-rooted Yersinia pestis strain Angola reveals new insights into the evolution and pangenome of the plague bacterium.</title>
        <authorList>
            <person name="Eppinger M."/>
            <person name="Worsham P.L."/>
            <person name="Nikolich M.P."/>
            <person name="Riley D.R."/>
            <person name="Sebastian Y."/>
            <person name="Mou S."/>
            <person name="Achtman M."/>
            <person name="Lindler L.E."/>
            <person name="Ravel J."/>
        </authorList>
    </citation>
    <scope>NUCLEOTIDE SEQUENCE [LARGE SCALE GENOMIC DNA]</scope>
    <source>
        <strain>Angola</strain>
    </source>
</reference>
<feature type="chain" id="PRO_1000195864" description="Protein SlyX">
    <location>
        <begin position="1"/>
        <end position="72"/>
    </location>
</feature>
<feature type="region of interest" description="Disordered" evidence="2">
    <location>
        <begin position="52"/>
        <end position="72"/>
    </location>
</feature>
<feature type="compositionally biased region" description="Polar residues" evidence="2">
    <location>
        <begin position="55"/>
        <end position="65"/>
    </location>
</feature>
<organism>
    <name type="scientific">Yersinia pestis bv. Antiqua (strain Angola)</name>
    <dbReference type="NCBI Taxonomy" id="349746"/>
    <lineage>
        <taxon>Bacteria</taxon>
        <taxon>Pseudomonadati</taxon>
        <taxon>Pseudomonadota</taxon>
        <taxon>Gammaproteobacteria</taxon>
        <taxon>Enterobacterales</taxon>
        <taxon>Yersiniaceae</taxon>
        <taxon>Yersinia</taxon>
    </lineage>
</organism>